<gene>
    <name type="primary">CRHBP</name>
    <name type="synonym">CRFBP</name>
</gene>
<proteinExistence type="evidence at protein level"/>
<evidence type="ECO:0000255" key="1"/>
<evidence type="ECO:0000269" key="2">
    <source>
    </source>
</evidence>
<evidence type="ECO:0000305" key="3"/>
<comment type="function">
    <text>Binds CRF and inactivates it. May prevent inappropriate pituitary-adrenal stimulation in pregnancy.</text>
</comment>
<comment type="subcellular location">
    <subcellularLocation>
        <location>Secreted</location>
    </subcellularLocation>
</comment>
<comment type="similarity">
    <text evidence="3">Belongs to the CRF-binding protein family.</text>
</comment>
<accession>P24387</accession>
<accession>Q53F32</accession>
<accession>Q6FHT5</accession>
<dbReference type="EMBL" id="X58022">
    <property type="protein sequence ID" value="CAA41086.1"/>
    <property type="status" value="ALT_SEQ"/>
    <property type="molecule type" value="mRNA"/>
</dbReference>
<dbReference type="EMBL" id="S60697">
    <property type="protein sequence ID" value="AAD13916.1"/>
    <property type="molecule type" value="Genomic_DNA"/>
</dbReference>
<dbReference type="EMBL" id="CR541666">
    <property type="protein sequence ID" value="CAG46467.1"/>
    <property type="molecule type" value="mRNA"/>
</dbReference>
<dbReference type="EMBL" id="AK223457">
    <property type="protein sequence ID" value="BAD97177.1"/>
    <property type="molecule type" value="mRNA"/>
</dbReference>
<dbReference type="EMBL" id="CH471084">
    <property type="protein sequence ID" value="EAW95786.1"/>
    <property type="molecule type" value="Genomic_DNA"/>
</dbReference>
<dbReference type="EMBL" id="BC018038">
    <property type="protein sequence ID" value="AAH18038.1"/>
    <property type="molecule type" value="mRNA"/>
</dbReference>
<dbReference type="CCDS" id="CCDS4034.1"/>
<dbReference type="PIR" id="S13640">
    <property type="entry name" value="S13640"/>
</dbReference>
<dbReference type="RefSeq" id="NP_001873.2">
    <property type="nucleotide sequence ID" value="NM_001882.3"/>
</dbReference>
<dbReference type="BioGRID" id="107783">
    <property type="interactions" value="15"/>
</dbReference>
<dbReference type="FunCoup" id="P24387">
    <property type="interactions" value="21"/>
</dbReference>
<dbReference type="IntAct" id="P24387">
    <property type="interactions" value="12"/>
</dbReference>
<dbReference type="STRING" id="9606.ENSP00000274368"/>
<dbReference type="BindingDB" id="P24387"/>
<dbReference type="ChEMBL" id="CHEMBL5930"/>
<dbReference type="GlyConnect" id="1932">
    <property type="glycosylation" value="6 N-Linked glycans (1 site)"/>
</dbReference>
<dbReference type="GlyCosmos" id="P24387">
    <property type="glycosylation" value="1 site, 6 glycans"/>
</dbReference>
<dbReference type="GlyGen" id="P24387">
    <property type="glycosylation" value="1 site, 9 N-linked glycans (1 site)"/>
</dbReference>
<dbReference type="iPTMnet" id="P24387"/>
<dbReference type="PhosphoSitePlus" id="P24387"/>
<dbReference type="BioMuta" id="CRHBP"/>
<dbReference type="DMDM" id="544099"/>
<dbReference type="MassIVE" id="P24387"/>
<dbReference type="PaxDb" id="9606-ENSP00000274368"/>
<dbReference type="PeptideAtlas" id="P24387"/>
<dbReference type="ProteomicsDB" id="54201"/>
<dbReference type="Antibodypedia" id="24474">
    <property type="antibodies" value="204 antibodies from 27 providers"/>
</dbReference>
<dbReference type="DNASU" id="1393"/>
<dbReference type="Ensembl" id="ENST00000274368.9">
    <property type="protein sequence ID" value="ENSP00000274368.4"/>
    <property type="gene ID" value="ENSG00000145708.11"/>
</dbReference>
<dbReference type="GeneID" id="1393"/>
<dbReference type="KEGG" id="hsa:1393"/>
<dbReference type="MANE-Select" id="ENST00000274368.9">
    <property type="protein sequence ID" value="ENSP00000274368.4"/>
    <property type="RefSeq nucleotide sequence ID" value="NM_001882.4"/>
    <property type="RefSeq protein sequence ID" value="NP_001873.2"/>
</dbReference>
<dbReference type="UCSC" id="uc003ker.4">
    <property type="organism name" value="human"/>
</dbReference>
<dbReference type="AGR" id="HGNC:2356"/>
<dbReference type="CTD" id="1393"/>
<dbReference type="DisGeNET" id="1393"/>
<dbReference type="GeneCards" id="CRHBP"/>
<dbReference type="HGNC" id="HGNC:2356">
    <property type="gene designation" value="CRHBP"/>
</dbReference>
<dbReference type="HPA" id="ENSG00000145708">
    <property type="expression patterns" value="Tissue enhanced (brain, liver)"/>
</dbReference>
<dbReference type="MIM" id="122559">
    <property type="type" value="gene"/>
</dbReference>
<dbReference type="neXtProt" id="NX_P24387"/>
<dbReference type="OpenTargets" id="ENSG00000145708"/>
<dbReference type="PharmGKB" id="PA26873"/>
<dbReference type="VEuPathDB" id="HostDB:ENSG00000145708"/>
<dbReference type="eggNOG" id="ENOG502QRNI">
    <property type="taxonomic scope" value="Eukaryota"/>
</dbReference>
<dbReference type="GeneTree" id="ENSGT00390000001362"/>
<dbReference type="HOGENOM" id="CLU_056739_0_0_1"/>
<dbReference type="InParanoid" id="P24387"/>
<dbReference type="OMA" id="EFCFPSI"/>
<dbReference type="OrthoDB" id="10056927at2759"/>
<dbReference type="PAN-GO" id="P24387">
    <property type="GO annotations" value="5 GO annotations based on evolutionary models"/>
</dbReference>
<dbReference type="PhylomeDB" id="P24387"/>
<dbReference type="TreeFam" id="TF105383"/>
<dbReference type="PathwayCommons" id="P24387"/>
<dbReference type="Reactome" id="R-HSA-373080">
    <property type="pathway name" value="Class B/2 (Secretin family receptors)"/>
</dbReference>
<dbReference type="SignaLink" id="P24387"/>
<dbReference type="BioGRID-ORCS" id="1393">
    <property type="hits" value="8 hits in 1141 CRISPR screens"/>
</dbReference>
<dbReference type="ChiTaRS" id="CRHBP">
    <property type="organism name" value="human"/>
</dbReference>
<dbReference type="GeneWiki" id="CRHBP"/>
<dbReference type="GenomeRNAi" id="1393"/>
<dbReference type="Pharos" id="P24387">
    <property type="development level" value="Tbio"/>
</dbReference>
<dbReference type="PRO" id="PR:P24387"/>
<dbReference type="Proteomes" id="UP000005640">
    <property type="component" value="Chromosome 5"/>
</dbReference>
<dbReference type="RNAct" id="P24387">
    <property type="molecule type" value="protein"/>
</dbReference>
<dbReference type="Bgee" id="ENSG00000145708">
    <property type="expression patterns" value="Expressed in primordial germ cell in gonad and 114 other cell types or tissues"/>
</dbReference>
<dbReference type="ExpressionAtlas" id="P24387">
    <property type="expression patterns" value="baseline and differential"/>
</dbReference>
<dbReference type="GO" id="GO:0043679">
    <property type="term" value="C:axon terminus"/>
    <property type="evidence" value="ECO:0000250"/>
    <property type="project" value="UniProtKB"/>
</dbReference>
<dbReference type="GO" id="GO:0030425">
    <property type="term" value="C:dendrite"/>
    <property type="evidence" value="ECO:0000250"/>
    <property type="project" value="UniProtKB"/>
</dbReference>
<dbReference type="GO" id="GO:0031045">
    <property type="term" value="C:dense core granule"/>
    <property type="evidence" value="ECO:0000250"/>
    <property type="project" value="UniProtKB"/>
</dbReference>
<dbReference type="GO" id="GO:0005576">
    <property type="term" value="C:extracellular region"/>
    <property type="evidence" value="ECO:0000304"/>
    <property type="project" value="Reactome"/>
</dbReference>
<dbReference type="GO" id="GO:0005615">
    <property type="term" value="C:extracellular space"/>
    <property type="evidence" value="ECO:0000314"/>
    <property type="project" value="UniProtKB"/>
</dbReference>
<dbReference type="GO" id="GO:0005874">
    <property type="term" value="C:microtubule"/>
    <property type="evidence" value="ECO:0000250"/>
    <property type="project" value="UniProtKB"/>
</dbReference>
<dbReference type="GO" id="GO:0005771">
    <property type="term" value="C:multivesicular body"/>
    <property type="evidence" value="ECO:0000250"/>
    <property type="project" value="UniProtKB"/>
</dbReference>
<dbReference type="GO" id="GO:0005634">
    <property type="term" value="C:nucleus"/>
    <property type="evidence" value="ECO:0000250"/>
    <property type="project" value="UniProtKB"/>
</dbReference>
<dbReference type="GO" id="GO:0043204">
    <property type="term" value="C:perikaryon"/>
    <property type="evidence" value="ECO:0000250"/>
    <property type="project" value="UniProtKB"/>
</dbReference>
<dbReference type="GO" id="GO:0005767">
    <property type="term" value="C:secondary lysosome"/>
    <property type="evidence" value="ECO:0000250"/>
    <property type="project" value="UniProtKB"/>
</dbReference>
<dbReference type="GO" id="GO:0030141">
    <property type="term" value="C:secretory granule"/>
    <property type="evidence" value="ECO:0000314"/>
    <property type="project" value="UniProtKB"/>
</dbReference>
<dbReference type="GO" id="GO:0043196">
    <property type="term" value="C:varicosity"/>
    <property type="evidence" value="ECO:0000250"/>
    <property type="project" value="UniProtKB"/>
</dbReference>
<dbReference type="GO" id="GO:0051424">
    <property type="term" value="F:corticotropin-releasing hormone binding"/>
    <property type="evidence" value="ECO:0000314"/>
    <property type="project" value="UniProtKB"/>
</dbReference>
<dbReference type="GO" id="GO:0042277">
    <property type="term" value="F:peptide binding"/>
    <property type="evidence" value="ECO:0000250"/>
    <property type="project" value="UniProtKB"/>
</dbReference>
<dbReference type="GO" id="GO:0048149">
    <property type="term" value="P:behavioral response to ethanol"/>
    <property type="evidence" value="ECO:0000315"/>
    <property type="project" value="UniProtKB"/>
</dbReference>
<dbReference type="GO" id="GO:0071277">
    <property type="term" value="P:cellular response to calcium ion"/>
    <property type="evidence" value="ECO:0000250"/>
    <property type="project" value="UniProtKB"/>
</dbReference>
<dbReference type="GO" id="GO:0071320">
    <property type="term" value="P:cellular response to cAMP"/>
    <property type="evidence" value="ECO:0000250"/>
    <property type="project" value="UniProtKB"/>
</dbReference>
<dbReference type="GO" id="GO:0071314">
    <property type="term" value="P:cellular response to cocaine"/>
    <property type="evidence" value="ECO:0000250"/>
    <property type="project" value="UniProtKB"/>
</dbReference>
<dbReference type="GO" id="GO:0071392">
    <property type="term" value="P:cellular response to estradiol stimulus"/>
    <property type="evidence" value="ECO:0000314"/>
    <property type="project" value="UniProtKB"/>
</dbReference>
<dbReference type="GO" id="GO:0071391">
    <property type="term" value="P:cellular response to estrogen stimulus"/>
    <property type="evidence" value="ECO:0000314"/>
    <property type="project" value="UniProtKB"/>
</dbReference>
<dbReference type="GO" id="GO:0097211">
    <property type="term" value="P:cellular response to gonadotropin-releasing hormone"/>
    <property type="evidence" value="ECO:0000250"/>
    <property type="project" value="UniProtKB"/>
</dbReference>
<dbReference type="GO" id="GO:0035865">
    <property type="term" value="P:cellular response to potassium ion"/>
    <property type="evidence" value="ECO:0000314"/>
    <property type="project" value="UniProtKB"/>
</dbReference>
<dbReference type="GO" id="GO:0071356">
    <property type="term" value="P:cellular response to tumor necrosis factor"/>
    <property type="evidence" value="ECO:0000314"/>
    <property type="project" value="UniProtKB"/>
</dbReference>
<dbReference type="GO" id="GO:0071466">
    <property type="term" value="P:cellular response to xenobiotic stimulus"/>
    <property type="evidence" value="ECO:0000250"/>
    <property type="project" value="UniProtKB"/>
</dbReference>
<dbReference type="GO" id="GO:0007565">
    <property type="term" value="P:female pregnancy"/>
    <property type="evidence" value="ECO:0000314"/>
    <property type="project" value="UniProtKB"/>
</dbReference>
<dbReference type="GO" id="GO:0042445">
    <property type="term" value="P:hormone metabolic process"/>
    <property type="evidence" value="ECO:0007669"/>
    <property type="project" value="Ensembl"/>
</dbReference>
<dbReference type="GO" id="GO:0009755">
    <property type="term" value="P:hormone-mediated signaling pathway"/>
    <property type="evidence" value="ECO:0000314"/>
    <property type="project" value="UniProtKB"/>
</dbReference>
<dbReference type="GO" id="GO:0006954">
    <property type="term" value="P:inflammatory response"/>
    <property type="evidence" value="ECO:0000314"/>
    <property type="project" value="UniProtKB"/>
</dbReference>
<dbReference type="GO" id="GO:0007611">
    <property type="term" value="P:learning or memory"/>
    <property type="evidence" value="ECO:0000304"/>
    <property type="project" value="UniProtKB"/>
</dbReference>
<dbReference type="GO" id="GO:0002125">
    <property type="term" value="P:maternal aggressive behavior"/>
    <property type="evidence" value="ECO:0007669"/>
    <property type="project" value="Ensembl"/>
</dbReference>
<dbReference type="GO" id="GO:0051460">
    <property type="term" value="P:negative regulation of corticotropin secretion"/>
    <property type="evidence" value="ECO:0000314"/>
    <property type="project" value="UniProtKB"/>
</dbReference>
<dbReference type="GO" id="GO:1900011">
    <property type="term" value="P:negative regulation of corticotropin-releasing hormone receptor activity"/>
    <property type="evidence" value="ECO:0000314"/>
    <property type="project" value="UniProtKB"/>
</dbReference>
<dbReference type="GO" id="GO:0045055">
    <property type="term" value="P:regulated exocytosis"/>
    <property type="evidence" value="ECO:0000314"/>
    <property type="project" value="UniProtKB"/>
</dbReference>
<dbReference type="GO" id="GO:0080135">
    <property type="term" value="P:regulation of cellular response to stress"/>
    <property type="evidence" value="ECO:0000315"/>
    <property type="project" value="UniProtKB"/>
</dbReference>
<dbReference type="GO" id="GO:0051459">
    <property type="term" value="P:regulation of corticotropin secretion"/>
    <property type="evidence" value="ECO:0000314"/>
    <property type="project" value="UniProtKB"/>
</dbReference>
<dbReference type="GO" id="GO:2000310">
    <property type="term" value="P:regulation of NMDA receptor activity"/>
    <property type="evidence" value="ECO:0000250"/>
    <property type="project" value="UniProtKB"/>
</dbReference>
<dbReference type="GO" id="GO:0007165">
    <property type="term" value="P:signal transduction"/>
    <property type="evidence" value="ECO:0000304"/>
    <property type="project" value="UniProtKB"/>
</dbReference>
<dbReference type="GO" id="GO:0001963">
    <property type="term" value="P:synaptic transmission, dopaminergic"/>
    <property type="evidence" value="ECO:0000250"/>
    <property type="project" value="UniProtKB"/>
</dbReference>
<dbReference type="Gene3D" id="2.60.120.290">
    <property type="entry name" value="Spermadhesin, CUB domain"/>
    <property type="match status" value="1"/>
</dbReference>
<dbReference type="InterPro" id="IPR008435">
    <property type="entry name" value="CRF-bd"/>
</dbReference>
<dbReference type="InterPro" id="IPR056178">
    <property type="entry name" value="CRF-BP_C"/>
</dbReference>
<dbReference type="InterPro" id="IPR056177">
    <property type="entry name" value="CRF-BP_N"/>
</dbReference>
<dbReference type="InterPro" id="IPR035914">
    <property type="entry name" value="Sperma_CUB_dom_sf"/>
</dbReference>
<dbReference type="PANTHER" id="PTHR10278">
    <property type="entry name" value="CORTICOTROPIN-RELEASING FACTOR-BINDING PROTEIN"/>
    <property type="match status" value="1"/>
</dbReference>
<dbReference type="PANTHER" id="PTHR10278:SF0">
    <property type="entry name" value="CORTICOTROPIN-RELEASING FACTOR-BINDING PROTEIN"/>
    <property type="match status" value="1"/>
</dbReference>
<dbReference type="Pfam" id="PF23541">
    <property type="entry name" value="CRF-BP_C"/>
    <property type="match status" value="1"/>
</dbReference>
<dbReference type="Pfam" id="PF05428">
    <property type="entry name" value="CRF-BP_N"/>
    <property type="match status" value="1"/>
</dbReference>
<dbReference type="PIRSF" id="PIRSF009279">
    <property type="entry name" value="CRF_bd"/>
    <property type="match status" value="1"/>
</dbReference>
<dbReference type="SUPFAM" id="SSF49854">
    <property type="entry name" value="Spermadhesin, CUB domain"/>
    <property type="match status" value="1"/>
</dbReference>
<keyword id="KW-0903">Direct protein sequencing</keyword>
<keyword id="KW-1015">Disulfide bond</keyword>
<keyword id="KW-0325">Glycoprotein</keyword>
<keyword id="KW-1267">Proteomics identification</keyword>
<keyword id="KW-1185">Reference proteome</keyword>
<keyword id="KW-0964">Secreted</keyword>
<keyword id="KW-0732">Signal</keyword>
<name>CRHBP_HUMAN</name>
<reference key="1">
    <citation type="journal article" date="1991" name="Nature">
        <title>Cloning and characterization of the cDNAs for human and rat corticotropin releasing factor-binding proteins.</title>
        <authorList>
            <person name="Potter E."/>
            <person name="Behan D.P."/>
            <person name="Fischer W.H."/>
            <person name="Linton E.A."/>
            <person name="Lowry P.J."/>
            <person name="Vale W.W."/>
        </authorList>
    </citation>
    <scope>NUCLEOTIDE SEQUENCE [MRNA]</scope>
    <scope>PARTIAL PROTEIN SEQUENCE</scope>
    <source>
        <tissue>Liver</tissue>
    </source>
</reference>
<reference key="2">
    <citation type="journal article" date="1994" name="J. Biol. Chem.">
        <title>Assignment of disulfide bonds in corticotropin-releasing factor-binding protein.</title>
        <authorList>
            <person name="Fischer W.H."/>
            <person name="Behan D.P."/>
            <person name="Park M."/>
            <person name="Potter E."/>
            <person name="Lowry P.J."/>
            <person name="Vale W.W."/>
        </authorList>
    </citation>
    <scope>SEQUENCE REVISION TO 47-48 AND 248</scope>
    <scope>DISULFIDE BONDS</scope>
</reference>
<reference key="3">
    <citation type="submission" date="2004-06" db="EMBL/GenBank/DDBJ databases">
        <title>Cloning of human full open reading frames in Gateway(TM) system entry vector (pDONR201).</title>
        <authorList>
            <person name="Ebert L."/>
            <person name="Schick M."/>
            <person name="Neubert P."/>
            <person name="Schatten R."/>
            <person name="Henze S."/>
            <person name="Korn B."/>
        </authorList>
    </citation>
    <scope>NUCLEOTIDE SEQUENCE [LARGE SCALE MRNA]</scope>
</reference>
<reference key="4">
    <citation type="submission" date="2005-04" db="EMBL/GenBank/DDBJ databases">
        <authorList>
            <person name="Totoki Y."/>
            <person name="Toyoda A."/>
            <person name="Takeda T."/>
            <person name="Sakaki Y."/>
            <person name="Tanaka A."/>
            <person name="Yokoyama S."/>
        </authorList>
    </citation>
    <scope>NUCLEOTIDE SEQUENCE [LARGE SCALE MRNA]</scope>
    <source>
        <tissue>Kidney</tissue>
    </source>
</reference>
<reference key="5">
    <citation type="submission" date="2005-07" db="EMBL/GenBank/DDBJ databases">
        <authorList>
            <person name="Mural R.J."/>
            <person name="Istrail S."/>
            <person name="Sutton G.G."/>
            <person name="Florea L."/>
            <person name="Halpern A.L."/>
            <person name="Mobarry C.M."/>
            <person name="Lippert R."/>
            <person name="Walenz B."/>
            <person name="Shatkay H."/>
            <person name="Dew I."/>
            <person name="Miller J.R."/>
            <person name="Flanigan M.J."/>
            <person name="Edwards N.J."/>
            <person name="Bolanos R."/>
            <person name="Fasulo D."/>
            <person name="Halldorsson B.V."/>
            <person name="Hannenhalli S."/>
            <person name="Turner R."/>
            <person name="Yooseph S."/>
            <person name="Lu F."/>
            <person name="Nusskern D.R."/>
            <person name="Shue B.C."/>
            <person name="Zheng X.H."/>
            <person name="Zhong F."/>
            <person name="Delcher A.L."/>
            <person name="Huson D.H."/>
            <person name="Kravitz S.A."/>
            <person name="Mouchard L."/>
            <person name="Reinert K."/>
            <person name="Remington K.A."/>
            <person name="Clark A.G."/>
            <person name="Waterman M.S."/>
            <person name="Eichler E.E."/>
            <person name="Adams M.D."/>
            <person name="Hunkapiller M.W."/>
            <person name="Myers E.W."/>
            <person name="Venter J.C."/>
        </authorList>
    </citation>
    <scope>NUCLEOTIDE SEQUENCE [LARGE SCALE GENOMIC DNA]</scope>
</reference>
<reference key="6">
    <citation type="journal article" date="2004" name="Genome Res.">
        <title>The status, quality, and expansion of the NIH full-length cDNA project: the Mammalian Gene Collection (MGC).</title>
        <authorList>
            <consortium name="The MGC Project Team"/>
        </authorList>
    </citation>
    <scope>NUCLEOTIDE SEQUENCE [LARGE SCALE MRNA]</scope>
    <source>
        <tissue>Hippocampus</tissue>
    </source>
</reference>
<reference key="7">
    <citation type="journal article" date="1993" name="Genomics">
        <title>Cloning and structure of the human corticotrophin releasing factor-binding protein gene (CRHBP).</title>
        <authorList>
            <person name="Behan D.P."/>
            <person name="Potter E."/>
            <person name="Lewis K.A."/>
            <person name="Jenkins N.A."/>
            <person name="Copeland N.G."/>
            <person name="Lowry P.J."/>
            <person name="Vale W.W."/>
        </authorList>
    </citation>
    <scope>NUCLEOTIDE SEQUENCE [GENOMIC DNA] OF 1-27</scope>
</reference>
<protein>
    <recommendedName>
        <fullName>Corticotropin-releasing factor-binding protein</fullName>
        <shortName>CRF-BP</shortName>
        <shortName>CRF-binding protein</shortName>
    </recommendedName>
    <alternativeName>
        <fullName>Corticotropin-releasing hormone-binding protein</fullName>
        <shortName>CRH-BP</shortName>
    </alternativeName>
</protein>
<feature type="signal peptide">
    <location>
        <begin position="1"/>
        <end position="24"/>
    </location>
</feature>
<feature type="chain" id="PRO_0000020994" description="Corticotropin-releasing factor-binding protein">
    <location>
        <begin position="25"/>
        <end position="322"/>
    </location>
</feature>
<feature type="glycosylation site" description="N-linked (GlcNAc...) asparagine" evidence="1">
    <location>
        <position position="204"/>
    </location>
</feature>
<feature type="disulfide bond" evidence="2">
    <location>
        <begin position="60"/>
        <end position="81"/>
    </location>
</feature>
<feature type="disulfide bond" evidence="2">
    <location>
        <begin position="104"/>
        <end position="141"/>
    </location>
</feature>
<feature type="disulfide bond" evidence="2">
    <location>
        <begin position="183"/>
        <end position="205"/>
    </location>
</feature>
<feature type="disulfide bond" evidence="2">
    <location>
        <begin position="237"/>
        <end position="264"/>
    </location>
</feature>
<feature type="disulfide bond" evidence="2">
    <location>
        <begin position="277"/>
        <end position="318"/>
    </location>
</feature>
<feature type="sequence conflict" description="In Ref. 4; BAD97177." evidence="3" ref="4">
    <original>N</original>
    <variation>D</variation>
    <location>
        <position position="279"/>
    </location>
</feature>
<sequence length="322" mass="36144">MSPNFKLQCHFILIFLTALRGESRYLELREAADYDPFLLFSANLKRELAGEQPYRRALRCLDMLSLQGQFTFTADRPQLHCAAFFISEPEEFITIHYDQVSIDCQGGDFLKVFDGWILKGEKFPSSQDHPLPSAERYIDFCESGLSRRSIRSSQNVAMIFFRVHEPGNGFTLTIKTDPNLFPCNVISQTPNGKFTLVVPHQHRNCSFSIIYPVVIKISDLTLGHVNGLQLKKSSAGCEGIGDFVELLGGTGLDPSKMTPLADLCYPFHGPAQMKVGCDNTVVRMVSSGKHVNRVTFEYRQLEPYELENPNGNSIGEFCLSGL</sequence>
<organism>
    <name type="scientific">Homo sapiens</name>
    <name type="common">Human</name>
    <dbReference type="NCBI Taxonomy" id="9606"/>
    <lineage>
        <taxon>Eukaryota</taxon>
        <taxon>Metazoa</taxon>
        <taxon>Chordata</taxon>
        <taxon>Craniata</taxon>
        <taxon>Vertebrata</taxon>
        <taxon>Euteleostomi</taxon>
        <taxon>Mammalia</taxon>
        <taxon>Eutheria</taxon>
        <taxon>Euarchontoglires</taxon>
        <taxon>Primates</taxon>
        <taxon>Haplorrhini</taxon>
        <taxon>Catarrhini</taxon>
        <taxon>Hominidae</taxon>
        <taxon>Homo</taxon>
    </lineage>
</organism>